<gene>
    <name evidence="1" type="primary">pnp</name>
    <name type="ordered locus">LBJ_0950</name>
</gene>
<dbReference type="EC" id="2.7.7.8" evidence="1"/>
<dbReference type="EMBL" id="CP000350">
    <property type="protein sequence ID" value="ABJ75593.1"/>
    <property type="molecule type" value="Genomic_DNA"/>
</dbReference>
<dbReference type="RefSeq" id="WP_004281551.1">
    <property type="nucleotide sequence ID" value="NC_008510.1"/>
</dbReference>
<dbReference type="SMR" id="Q04U27"/>
<dbReference type="KEGG" id="lbj:LBJ_0950"/>
<dbReference type="HOGENOM" id="CLU_004217_2_2_12"/>
<dbReference type="Proteomes" id="UP000000656">
    <property type="component" value="Chromosome 1"/>
</dbReference>
<dbReference type="GO" id="GO:0005829">
    <property type="term" value="C:cytosol"/>
    <property type="evidence" value="ECO:0007669"/>
    <property type="project" value="TreeGrafter"/>
</dbReference>
<dbReference type="GO" id="GO:0000175">
    <property type="term" value="F:3'-5'-RNA exonuclease activity"/>
    <property type="evidence" value="ECO:0007669"/>
    <property type="project" value="TreeGrafter"/>
</dbReference>
<dbReference type="GO" id="GO:0000287">
    <property type="term" value="F:magnesium ion binding"/>
    <property type="evidence" value="ECO:0007669"/>
    <property type="project" value="UniProtKB-UniRule"/>
</dbReference>
<dbReference type="GO" id="GO:0004654">
    <property type="term" value="F:polyribonucleotide nucleotidyltransferase activity"/>
    <property type="evidence" value="ECO:0007669"/>
    <property type="project" value="UniProtKB-UniRule"/>
</dbReference>
<dbReference type="GO" id="GO:0003723">
    <property type="term" value="F:RNA binding"/>
    <property type="evidence" value="ECO:0007669"/>
    <property type="project" value="UniProtKB-UniRule"/>
</dbReference>
<dbReference type="GO" id="GO:0006402">
    <property type="term" value="P:mRNA catabolic process"/>
    <property type="evidence" value="ECO:0007669"/>
    <property type="project" value="UniProtKB-UniRule"/>
</dbReference>
<dbReference type="GO" id="GO:0006396">
    <property type="term" value="P:RNA processing"/>
    <property type="evidence" value="ECO:0007669"/>
    <property type="project" value="InterPro"/>
</dbReference>
<dbReference type="CDD" id="cd02393">
    <property type="entry name" value="KH-I_PNPase"/>
    <property type="match status" value="1"/>
</dbReference>
<dbReference type="CDD" id="cd11363">
    <property type="entry name" value="RNase_PH_PNPase_1"/>
    <property type="match status" value="1"/>
</dbReference>
<dbReference type="CDD" id="cd11364">
    <property type="entry name" value="RNase_PH_PNPase_2"/>
    <property type="match status" value="1"/>
</dbReference>
<dbReference type="CDD" id="cd04472">
    <property type="entry name" value="S1_PNPase"/>
    <property type="match status" value="1"/>
</dbReference>
<dbReference type="FunFam" id="2.40.50.140:FF:000023">
    <property type="entry name" value="Polyribonucleotide nucleotidyltransferase"/>
    <property type="match status" value="1"/>
</dbReference>
<dbReference type="FunFam" id="3.30.1370.10:FF:000001">
    <property type="entry name" value="Polyribonucleotide nucleotidyltransferase"/>
    <property type="match status" value="1"/>
</dbReference>
<dbReference type="FunFam" id="3.30.230.70:FF:000001">
    <property type="entry name" value="Polyribonucleotide nucleotidyltransferase"/>
    <property type="match status" value="1"/>
</dbReference>
<dbReference type="FunFam" id="3.30.230.70:FF:000013">
    <property type="entry name" value="Polyribonucleotide nucleotidyltransferase"/>
    <property type="match status" value="1"/>
</dbReference>
<dbReference type="Gene3D" id="3.30.230.70">
    <property type="entry name" value="GHMP Kinase, N-terminal domain"/>
    <property type="match status" value="2"/>
</dbReference>
<dbReference type="Gene3D" id="3.30.1370.10">
    <property type="entry name" value="K Homology domain, type 1"/>
    <property type="match status" value="1"/>
</dbReference>
<dbReference type="Gene3D" id="2.40.50.140">
    <property type="entry name" value="Nucleic acid-binding proteins"/>
    <property type="match status" value="1"/>
</dbReference>
<dbReference type="HAMAP" id="MF_01595">
    <property type="entry name" value="PNPase"/>
    <property type="match status" value="1"/>
</dbReference>
<dbReference type="InterPro" id="IPR001247">
    <property type="entry name" value="ExoRNase_PH_dom1"/>
</dbReference>
<dbReference type="InterPro" id="IPR015847">
    <property type="entry name" value="ExoRNase_PH_dom2"/>
</dbReference>
<dbReference type="InterPro" id="IPR036345">
    <property type="entry name" value="ExoRNase_PH_dom2_sf"/>
</dbReference>
<dbReference type="InterPro" id="IPR004087">
    <property type="entry name" value="KH_dom"/>
</dbReference>
<dbReference type="InterPro" id="IPR004088">
    <property type="entry name" value="KH_dom_type_1"/>
</dbReference>
<dbReference type="InterPro" id="IPR036612">
    <property type="entry name" value="KH_dom_type_1_sf"/>
</dbReference>
<dbReference type="InterPro" id="IPR012340">
    <property type="entry name" value="NA-bd_OB-fold"/>
</dbReference>
<dbReference type="InterPro" id="IPR012162">
    <property type="entry name" value="PNPase"/>
</dbReference>
<dbReference type="InterPro" id="IPR027408">
    <property type="entry name" value="PNPase/RNase_PH_dom_sf"/>
</dbReference>
<dbReference type="InterPro" id="IPR015848">
    <property type="entry name" value="PNPase_PH_RNA-bd_bac/org-type"/>
</dbReference>
<dbReference type="InterPro" id="IPR036456">
    <property type="entry name" value="PNPase_PH_RNA-bd_sf"/>
</dbReference>
<dbReference type="InterPro" id="IPR020568">
    <property type="entry name" value="Ribosomal_Su5_D2-typ_SF"/>
</dbReference>
<dbReference type="InterPro" id="IPR003029">
    <property type="entry name" value="S1_domain"/>
</dbReference>
<dbReference type="NCBIfam" id="TIGR03591">
    <property type="entry name" value="polynuc_phos"/>
    <property type="match status" value="1"/>
</dbReference>
<dbReference type="NCBIfam" id="NF008805">
    <property type="entry name" value="PRK11824.1"/>
    <property type="match status" value="1"/>
</dbReference>
<dbReference type="PANTHER" id="PTHR11252">
    <property type="entry name" value="POLYRIBONUCLEOTIDE NUCLEOTIDYLTRANSFERASE"/>
    <property type="match status" value="1"/>
</dbReference>
<dbReference type="PANTHER" id="PTHR11252:SF0">
    <property type="entry name" value="POLYRIBONUCLEOTIDE NUCLEOTIDYLTRANSFERASE 1, MITOCHONDRIAL"/>
    <property type="match status" value="1"/>
</dbReference>
<dbReference type="Pfam" id="PF00013">
    <property type="entry name" value="KH_1"/>
    <property type="match status" value="1"/>
</dbReference>
<dbReference type="Pfam" id="PF03726">
    <property type="entry name" value="PNPase"/>
    <property type="match status" value="1"/>
</dbReference>
<dbReference type="Pfam" id="PF01138">
    <property type="entry name" value="RNase_PH"/>
    <property type="match status" value="2"/>
</dbReference>
<dbReference type="Pfam" id="PF03725">
    <property type="entry name" value="RNase_PH_C"/>
    <property type="match status" value="1"/>
</dbReference>
<dbReference type="Pfam" id="PF00575">
    <property type="entry name" value="S1"/>
    <property type="match status" value="1"/>
</dbReference>
<dbReference type="PIRSF" id="PIRSF005499">
    <property type="entry name" value="PNPase"/>
    <property type="match status" value="1"/>
</dbReference>
<dbReference type="SMART" id="SM00322">
    <property type="entry name" value="KH"/>
    <property type="match status" value="1"/>
</dbReference>
<dbReference type="SMART" id="SM00316">
    <property type="entry name" value="S1"/>
    <property type="match status" value="1"/>
</dbReference>
<dbReference type="SUPFAM" id="SSF54791">
    <property type="entry name" value="Eukaryotic type KH-domain (KH-domain type I)"/>
    <property type="match status" value="1"/>
</dbReference>
<dbReference type="SUPFAM" id="SSF50249">
    <property type="entry name" value="Nucleic acid-binding proteins"/>
    <property type="match status" value="1"/>
</dbReference>
<dbReference type="SUPFAM" id="SSF46915">
    <property type="entry name" value="Polynucleotide phosphorylase/guanosine pentaphosphate synthase (PNPase/GPSI), domain 3"/>
    <property type="match status" value="1"/>
</dbReference>
<dbReference type="SUPFAM" id="SSF55666">
    <property type="entry name" value="Ribonuclease PH domain 2-like"/>
    <property type="match status" value="2"/>
</dbReference>
<dbReference type="SUPFAM" id="SSF54211">
    <property type="entry name" value="Ribosomal protein S5 domain 2-like"/>
    <property type="match status" value="2"/>
</dbReference>
<dbReference type="PROSITE" id="PS50084">
    <property type="entry name" value="KH_TYPE_1"/>
    <property type="match status" value="1"/>
</dbReference>
<dbReference type="PROSITE" id="PS50126">
    <property type="entry name" value="S1"/>
    <property type="match status" value="1"/>
</dbReference>
<reference key="1">
    <citation type="journal article" date="2006" name="Proc. Natl. Acad. Sci. U.S.A.">
        <title>Genome reduction in Leptospira borgpetersenii reflects limited transmission potential.</title>
        <authorList>
            <person name="Bulach D.M."/>
            <person name="Zuerner R.L."/>
            <person name="Wilson P."/>
            <person name="Seemann T."/>
            <person name="McGrath A."/>
            <person name="Cullen P.A."/>
            <person name="Davis J."/>
            <person name="Johnson M."/>
            <person name="Kuczek E."/>
            <person name="Alt D.P."/>
            <person name="Peterson-Burch B."/>
            <person name="Coppel R.L."/>
            <person name="Rood J.I."/>
            <person name="Davies J.K."/>
            <person name="Adler B."/>
        </authorList>
    </citation>
    <scope>NUCLEOTIDE SEQUENCE [LARGE SCALE GENOMIC DNA]</scope>
    <source>
        <strain>JB197</strain>
    </source>
</reference>
<keyword id="KW-0963">Cytoplasm</keyword>
<keyword id="KW-0460">Magnesium</keyword>
<keyword id="KW-0479">Metal-binding</keyword>
<keyword id="KW-0548">Nucleotidyltransferase</keyword>
<keyword id="KW-0694">RNA-binding</keyword>
<keyword id="KW-0808">Transferase</keyword>
<name>PNP_LEPBJ</name>
<organism>
    <name type="scientific">Leptospira borgpetersenii serovar Hardjo-bovis (strain JB197)</name>
    <dbReference type="NCBI Taxonomy" id="355277"/>
    <lineage>
        <taxon>Bacteria</taxon>
        <taxon>Pseudomonadati</taxon>
        <taxon>Spirochaetota</taxon>
        <taxon>Spirochaetia</taxon>
        <taxon>Leptospirales</taxon>
        <taxon>Leptospiraceae</taxon>
        <taxon>Leptospira</taxon>
    </lineage>
</organism>
<comment type="function">
    <text evidence="1">Involved in mRNA degradation. Catalyzes the phosphorolysis of single-stranded polyribonucleotides processively in the 3'- to 5'-direction.</text>
</comment>
<comment type="catalytic activity">
    <reaction evidence="1">
        <text>RNA(n+1) + phosphate = RNA(n) + a ribonucleoside 5'-diphosphate</text>
        <dbReference type="Rhea" id="RHEA:22096"/>
        <dbReference type="Rhea" id="RHEA-COMP:14527"/>
        <dbReference type="Rhea" id="RHEA-COMP:17342"/>
        <dbReference type="ChEBI" id="CHEBI:43474"/>
        <dbReference type="ChEBI" id="CHEBI:57930"/>
        <dbReference type="ChEBI" id="CHEBI:140395"/>
        <dbReference type="EC" id="2.7.7.8"/>
    </reaction>
</comment>
<comment type="cofactor">
    <cofactor evidence="1">
        <name>Mg(2+)</name>
        <dbReference type="ChEBI" id="CHEBI:18420"/>
    </cofactor>
</comment>
<comment type="subcellular location">
    <subcellularLocation>
        <location evidence="1">Cytoplasm</location>
    </subcellularLocation>
</comment>
<comment type="similarity">
    <text evidence="1">Belongs to the polyribonucleotide nucleotidyltransferase family.</text>
</comment>
<proteinExistence type="inferred from homology"/>
<sequence length="696" mass="76188">MTHTISGQYGRDTIVLETGNWAKQAHGAVVYKSGNLVLLATVCAADDAKEGQDFFPLTCEYTEKLYSVGRFPGGYFKREAKPPEHEILISRIIDRPIRPLFPEGYFCEVQLQVQVLSADGDVSVAGHALNAASVALTISDIPFNGPIAGARIGRINGELILNPTTKEIVNSDLDLVVAGTKTHIVMIEGEAKELSNEEMLSALRFAQKHIAEFVTLQEEYAKQIGVVKREVKLKARDVELLAKVKEYAFAKLTAANQTPDKTVRNKEISNVNKDVVEFFKQTVEDADKIKDIKTYLHELEYEIVREQVLNQGVRFDGRRLDEIRPISVEINPLPGPHGSSVFTRGQTQSLGVVTLGTGSDNQRYETLEGQKEKSFMLHYNFPAFSVGEVRRSSGPGRREIGHGNLAERALKLVLPKSEEFPYVIRVVSEILESNGSSSMASVCSGSLALMAAGVPIKGSVSGIAMGLFSDSSGKYAVLSDIAGLEDHFGDMDCKIAGTRKGITAFQMDLKVTGVSFDVLESVFEQAQRGRFHILDIMEKHISKASDSLAGTAPRIIVRNIPKDRIGELIGPGGKNVRGISELTGAELYIEDDGRVTISGSNQESAEKAAKMVDGFFAEVEVGKIYEGKVKRIADFGAFVEILPGKEGLCHISKIDFKRVNSVKDIVKEGDIIRVKVLNVDKTGKIDLSRKDALEEI</sequence>
<accession>Q04U27</accession>
<feature type="chain" id="PRO_0000329697" description="Polyribonucleotide nucleotidyltransferase">
    <location>
        <begin position="1"/>
        <end position="696"/>
    </location>
</feature>
<feature type="domain" description="KH" evidence="1">
    <location>
        <begin position="553"/>
        <end position="612"/>
    </location>
</feature>
<feature type="domain" description="S1 motif" evidence="1">
    <location>
        <begin position="622"/>
        <end position="690"/>
    </location>
</feature>
<feature type="binding site" evidence="1">
    <location>
        <position position="486"/>
    </location>
    <ligand>
        <name>Mg(2+)</name>
        <dbReference type="ChEBI" id="CHEBI:18420"/>
    </ligand>
</feature>
<feature type="binding site" evidence="1">
    <location>
        <position position="492"/>
    </location>
    <ligand>
        <name>Mg(2+)</name>
        <dbReference type="ChEBI" id="CHEBI:18420"/>
    </ligand>
</feature>
<evidence type="ECO:0000255" key="1">
    <source>
        <dbReference type="HAMAP-Rule" id="MF_01595"/>
    </source>
</evidence>
<protein>
    <recommendedName>
        <fullName evidence="1">Polyribonucleotide nucleotidyltransferase</fullName>
        <ecNumber evidence="1">2.7.7.8</ecNumber>
    </recommendedName>
    <alternativeName>
        <fullName evidence="1">Polynucleotide phosphorylase</fullName>
        <shortName evidence="1">PNPase</shortName>
    </alternativeName>
</protein>